<reference key="1">
    <citation type="journal article" date="2009" name="J. Bacteriol.">
        <title>Genome sequence of Azotobacter vinelandii, an obligate aerobe specialized to support diverse anaerobic metabolic processes.</title>
        <authorList>
            <person name="Setubal J.C."/>
            <person name="Dos Santos P."/>
            <person name="Goldman B.S."/>
            <person name="Ertesvaag H."/>
            <person name="Espin G."/>
            <person name="Rubio L.M."/>
            <person name="Valla S."/>
            <person name="Almeida N.F."/>
            <person name="Balasubramanian D."/>
            <person name="Cromes L."/>
            <person name="Curatti L."/>
            <person name="Du Z."/>
            <person name="Godsy E."/>
            <person name="Goodner B."/>
            <person name="Hellner-Burris K."/>
            <person name="Hernandez J.A."/>
            <person name="Houmiel K."/>
            <person name="Imperial J."/>
            <person name="Kennedy C."/>
            <person name="Larson T.J."/>
            <person name="Latreille P."/>
            <person name="Ligon L.S."/>
            <person name="Lu J."/>
            <person name="Maerk M."/>
            <person name="Miller N.M."/>
            <person name="Norton S."/>
            <person name="O'Carroll I.P."/>
            <person name="Paulsen I."/>
            <person name="Raulfs E.C."/>
            <person name="Roemer R."/>
            <person name="Rosser J."/>
            <person name="Segura D."/>
            <person name="Slater S."/>
            <person name="Stricklin S.L."/>
            <person name="Studholme D.J."/>
            <person name="Sun J."/>
            <person name="Viana C.J."/>
            <person name="Wallin E."/>
            <person name="Wang B."/>
            <person name="Wheeler C."/>
            <person name="Zhu H."/>
            <person name="Dean D.R."/>
            <person name="Dixon R."/>
            <person name="Wood D."/>
        </authorList>
    </citation>
    <scope>NUCLEOTIDE SEQUENCE [LARGE SCALE GENOMIC DNA]</scope>
    <source>
        <strain>DJ / ATCC BAA-1303</strain>
    </source>
</reference>
<feature type="chain" id="PRO_1000205150" description="Ferrochelatase">
    <location>
        <begin position="1"/>
        <end position="338"/>
    </location>
</feature>
<feature type="binding site" evidence="1">
    <location>
        <position position="189"/>
    </location>
    <ligand>
        <name>Fe cation</name>
        <dbReference type="ChEBI" id="CHEBI:24875"/>
    </ligand>
</feature>
<feature type="binding site" evidence="1">
    <location>
        <position position="293"/>
    </location>
    <ligand>
        <name>Fe cation</name>
        <dbReference type="ChEBI" id="CHEBI:24875"/>
    </ligand>
</feature>
<sequence length="338" mass="37988">MTDHALLLVNLGSPDSPEVADVRRYLDQFLMDPYVIDLPWPLRRLLVSLILRKRPEQSAHAYASIWWPEGSPLIALSRRLQEAVQAHWHEGPVELAMRYGNLSIEAALNRLAEEGVRRVTLAPLYPQFADSTVTTVVEETRRVLRASGLTLELRVLEPFFARPEYLDALARSAGPHLQQGFDHLLLSFHGLPERHLRKADPSGRHCLGSADCCREAPVEVLARCYRAQCLRSAEGFARRMGLDEGRWSVSFQSRLGRARWISPYTEEQLDALAARGVKRLLVMCPAFVTDCIETLEEIGQRGREQFQAAGGEELILVPCLNDHPAWASALAQLCRTPG</sequence>
<accession>C1DEU1</accession>
<keyword id="KW-0963">Cytoplasm</keyword>
<keyword id="KW-0350">Heme biosynthesis</keyword>
<keyword id="KW-0408">Iron</keyword>
<keyword id="KW-0456">Lyase</keyword>
<keyword id="KW-0479">Metal-binding</keyword>
<keyword id="KW-0627">Porphyrin biosynthesis</keyword>
<protein>
    <recommendedName>
        <fullName evidence="1">Ferrochelatase</fullName>
        <ecNumber evidence="1">4.98.1.1</ecNumber>
    </recommendedName>
    <alternativeName>
        <fullName evidence="1">Heme synthase</fullName>
    </alternativeName>
    <alternativeName>
        <fullName evidence="1">Protoheme ferro-lyase</fullName>
    </alternativeName>
</protein>
<organism>
    <name type="scientific">Azotobacter vinelandii (strain DJ / ATCC BAA-1303)</name>
    <dbReference type="NCBI Taxonomy" id="322710"/>
    <lineage>
        <taxon>Bacteria</taxon>
        <taxon>Pseudomonadati</taxon>
        <taxon>Pseudomonadota</taxon>
        <taxon>Gammaproteobacteria</taxon>
        <taxon>Pseudomonadales</taxon>
        <taxon>Pseudomonadaceae</taxon>
        <taxon>Azotobacter</taxon>
    </lineage>
</organism>
<comment type="function">
    <text evidence="1">Catalyzes the ferrous insertion into protoporphyrin IX.</text>
</comment>
<comment type="catalytic activity">
    <reaction evidence="1">
        <text>heme b + 2 H(+) = protoporphyrin IX + Fe(2+)</text>
        <dbReference type="Rhea" id="RHEA:22584"/>
        <dbReference type="ChEBI" id="CHEBI:15378"/>
        <dbReference type="ChEBI" id="CHEBI:29033"/>
        <dbReference type="ChEBI" id="CHEBI:57306"/>
        <dbReference type="ChEBI" id="CHEBI:60344"/>
        <dbReference type="EC" id="4.98.1.1"/>
    </reaction>
</comment>
<comment type="pathway">
    <text evidence="1">Porphyrin-containing compound metabolism; protoheme biosynthesis; protoheme from protoporphyrin-IX: step 1/1.</text>
</comment>
<comment type="subcellular location">
    <subcellularLocation>
        <location evidence="1">Cytoplasm</location>
    </subcellularLocation>
</comment>
<comment type="similarity">
    <text evidence="1">Belongs to the ferrochelatase family.</text>
</comment>
<dbReference type="EC" id="4.98.1.1" evidence="1"/>
<dbReference type="EMBL" id="CP001157">
    <property type="protein sequence ID" value="ACO80270.1"/>
    <property type="molecule type" value="Genomic_DNA"/>
</dbReference>
<dbReference type="RefSeq" id="WP_012702643.1">
    <property type="nucleotide sequence ID" value="NC_012560.1"/>
</dbReference>
<dbReference type="SMR" id="C1DEU1"/>
<dbReference type="STRING" id="322710.Avin_41370"/>
<dbReference type="EnsemblBacteria" id="ACO80270">
    <property type="protein sequence ID" value="ACO80270"/>
    <property type="gene ID" value="Avin_41370"/>
</dbReference>
<dbReference type="GeneID" id="88187069"/>
<dbReference type="KEGG" id="avn:Avin_41370"/>
<dbReference type="eggNOG" id="COG0276">
    <property type="taxonomic scope" value="Bacteria"/>
</dbReference>
<dbReference type="HOGENOM" id="CLU_018884_0_1_6"/>
<dbReference type="OrthoDB" id="9809741at2"/>
<dbReference type="UniPathway" id="UPA00252">
    <property type="reaction ID" value="UER00325"/>
</dbReference>
<dbReference type="Proteomes" id="UP000002424">
    <property type="component" value="Chromosome"/>
</dbReference>
<dbReference type="GO" id="GO:0005737">
    <property type="term" value="C:cytoplasm"/>
    <property type="evidence" value="ECO:0007669"/>
    <property type="project" value="UniProtKB-SubCell"/>
</dbReference>
<dbReference type="GO" id="GO:0004325">
    <property type="term" value="F:ferrochelatase activity"/>
    <property type="evidence" value="ECO:0007669"/>
    <property type="project" value="UniProtKB-UniRule"/>
</dbReference>
<dbReference type="GO" id="GO:0046872">
    <property type="term" value="F:metal ion binding"/>
    <property type="evidence" value="ECO:0007669"/>
    <property type="project" value="UniProtKB-KW"/>
</dbReference>
<dbReference type="GO" id="GO:0006783">
    <property type="term" value="P:heme biosynthetic process"/>
    <property type="evidence" value="ECO:0007669"/>
    <property type="project" value="UniProtKB-UniRule"/>
</dbReference>
<dbReference type="CDD" id="cd00419">
    <property type="entry name" value="Ferrochelatase_C"/>
    <property type="match status" value="1"/>
</dbReference>
<dbReference type="CDD" id="cd03411">
    <property type="entry name" value="Ferrochelatase_N"/>
    <property type="match status" value="1"/>
</dbReference>
<dbReference type="Gene3D" id="3.40.50.1400">
    <property type="match status" value="2"/>
</dbReference>
<dbReference type="HAMAP" id="MF_00323">
    <property type="entry name" value="Ferrochelatase"/>
    <property type="match status" value="1"/>
</dbReference>
<dbReference type="InterPro" id="IPR001015">
    <property type="entry name" value="Ferrochelatase"/>
</dbReference>
<dbReference type="InterPro" id="IPR033644">
    <property type="entry name" value="Ferrochelatase_C"/>
</dbReference>
<dbReference type="InterPro" id="IPR033659">
    <property type="entry name" value="Ferrochelatase_N"/>
</dbReference>
<dbReference type="NCBIfam" id="TIGR00109">
    <property type="entry name" value="hemH"/>
    <property type="match status" value="1"/>
</dbReference>
<dbReference type="PANTHER" id="PTHR11108">
    <property type="entry name" value="FERROCHELATASE"/>
    <property type="match status" value="1"/>
</dbReference>
<dbReference type="PANTHER" id="PTHR11108:SF1">
    <property type="entry name" value="FERROCHELATASE, MITOCHONDRIAL"/>
    <property type="match status" value="1"/>
</dbReference>
<dbReference type="Pfam" id="PF00762">
    <property type="entry name" value="Ferrochelatase"/>
    <property type="match status" value="1"/>
</dbReference>
<dbReference type="SUPFAM" id="SSF53800">
    <property type="entry name" value="Chelatase"/>
    <property type="match status" value="1"/>
</dbReference>
<name>HEMH_AZOVD</name>
<evidence type="ECO:0000255" key="1">
    <source>
        <dbReference type="HAMAP-Rule" id="MF_00323"/>
    </source>
</evidence>
<gene>
    <name evidence="1" type="primary">hemH</name>
    <name type="ordered locus">Avin_41370</name>
</gene>
<proteinExistence type="inferred from homology"/>